<name>Y1486_HAEIN</name>
<protein>
    <recommendedName>
        <fullName>Putative uncharacterized protein HI_1486 in Mu-like prophage FluMu region</fullName>
    </recommendedName>
</protein>
<sequence length="57" mass="6588">MMTETRKNELENQLNQMIVMLKEAQKSLFKGQYTHAAIFVGNVSDQLPNMRMMLARG</sequence>
<proteinExistence type="uncertain"/>
<evidence type="ECO:0000305" key="1"/>
<organism>
    <name type="scientific">Haemophilus influenzae (strain ATCC 51907 / DSM 11121 / KW20 / Rd)</name>
    <dbReference type="NCBI Taxonomy" id="71421"/>
    <lineage>
        <taxon>Bacteria</taxon>
        <taxon>Pseudomonadati</taxon>
        <taxon>Pseudomonadota</taxon>
        <taxon>Gammaproteobacteria</taxon>
        <taxon>Pasteurellales</taxon>
        <taxon>Pasteurellaceae</taxon>
        <taxon>Haemophilus</taxon>
    </lineage>
</organism>
<accession>P44213</accession>
<feature type="chain" id="PRO_0000078070" description="Putative uncharacterized protein HI_1486 in Mu-like prophage FluMu region">
    <location>
        <begin position="1"/>
        <end position="57"/>
    </location>
</feature>
<reference key="1">
    <citation type="journal article" date="1995" name="Science">
        <title>Whole-genome random sequencing and assembly of Haemophilus influenzae Rd.</title>
        <authorList>
            <person name="Fleischmann R.D."/>
            <person name="Adams M.D."/>
            <person name="White O."/>
            <person name="Clayton R.A."/>
            <person name="Kirkness E.F."/>
            <person name="Kerlavage A.R."/>
            <person name="Bult C.J."/>
            <person name="Tomb J.-F."/>
            <person name="Dougherty B.A."/>
            <person name="Merrick J.M."/>
            <person name="McKenney K."/>
            <person name="Sutton G.G."/>
            <person name="FitzHugh W."/>
            <person name="Fields C.A."/>
            <person name="Gocayne J.D."/>
            <person name="Scott J.D."/>
            <person name="Shirley R."/>
            <person name="Liu L.-I."/>
            <person name="Glodek A."/>
            <person name="Kelley J.M."/>
            <person name="Weidman J.F."/>
            <person name="Phillips C.A."/>
            <person name="Spriggs T."/>
            <person name="Hedblom E."/>
            <person name="Cotton M.D."/>
            <person name="Utterback T.R."/>
            <person name="Hanna M.C."/>
            <person name="Nguyen D.T."/>
            <person name="Saudek D.M."/>
            <person name="Brandon R.C."/>
            <person name="Fine L.D."/>
            <person name="Fritchman J.L."/>
            <person name="Fuhrmann J.L."/>
            <person name="Geoghagen N.S.M."/>
            <person name="Gnehm C.L."/>
            <person name="McDonald L.A."/>
            <person name="Small K.V."/>
            <person name="Fraser C.M."/>
            <person name="Smith H.O."/>
            <person name="Venter J.C."/>
        </authorList>
    </citation>
    <scope>NUCLEOTIDE SEQUENCE [LARGE SCALE GENOMIC DNA]</scope>
    <source>
        <strain>ATCC 51907 / DSM 11121 / KW20 / Rd</strain>
    </source>
</reference>
<keyword id="KW-1185">Reference proteome</keyword>
<comment type="caution">
    <text evidence="1">Could be the product of a pseudogene.</text>
</comment>
<gene>
    <name type="ordered locus">HI_1486</name>
</gene>
<dbReference type="EMBL" id="L42023">
    <property type="protein sequence ID" value="AAC23141.1"/>
    <property type="molecule type" value="Genomic_DNA"/>
</dbReference>
<dbReference type="PIR" id="G64031">
    <property type="entry name" value="G64031"/>
</dbReference>
<dbReference type="RefSeq" id="NP_439636.1">
    <property type="nucleotide sequence ID" value="NC_000907.1"/>
</dbReference>
<dbReference type="SMR" id="P44213"/>
<dbReference type="STRING" id="71421.HI_1486"/>
<dbReference type="EnsemblBacteria" id="AAC23141">
    <property type="protein sequence ID" value="AAC23141"/>
    <property type="gene ID" value="HI_1486"/>
</dbReference>
<dbReference type="KEGG" id="hin:HI_1486"/>
<dbReference type="PATRIC" id="fig|71421.8.peg.1554"/>
<dbReference type="eggNOG" id="ENOG5031KE8">
    <property type="taxonomic scope" value="Bacteria"/>
</dbReference>
<dbReference type="HOGENOM" id="CLU_209759_0_0_6"/>
<dbReference type="OrthoDB" id="9881898at2"/>
<dbReference type="BioCyc" id="HINF71421:G1GJ1-1510-MONOMER"/>
<dbReference type="Proteomes" id="UP000000579">
    <property type="component" value="Chromosome"/>
</dbReference>